<feature type="chain" id="PRO_0000454717" description="Stork-head box protein ham-1">
    <location>
        <begin position="1"/>
        <end position="414"/>
    </location>
</feature>
<feature type="domain" description="Winged helix Storkhead-box1" evidence="1">
    <location>
        <begin position="93"/>
        <end position="170"/>
    </location>
</feature>
<feature type="region of interest" description="Essential for association with cell cortex" evidence="6">
    <location>
        <begin position="1"/>
        <end position="31"/>
    </location>
</feature>
<feature type="region of interest" description="Disordered" evidence="2">
    <location>
        <begin position="282"/>
        <end position="362"/>
    </location>
</feature>
<feature type="region of interest" description="Bi-partite nuclear localization signal" evidence="6">
    <location>
        <begin position="285"/>
        <end position="295"/>
    </location>
</feature>
<feature type="region of interest" description="Nuclear localization signal" evidence="6">
    <location>
        <begin position="321"/>
        <end position="327"/>
    </location>
</feature>
<feature type="compositionally biased region" description="Polar residues" evidence="2">
    <location>
        <begin position="332"/>
        <end position="351"/>
    </location>
</feature>
<feature type="mutagenesis site" description="Almost completely eliminates localization to cell cortex." evidence="6">
    <location>
        <begin position="1"/>
        <end position="31"/>
    </location>
</feature>
<feature type="mutagenesis site" description="In n1810; defects in the hermaphrodite-specific neurons (HSN); abnormal migration, reduced levels of serotonin, also egg-laying defects. Localized inappropriately to the cytoplasm." evidence="3 9">
    <original>G</original>
    <variation>D</variation>
    <location>
        <position position="47"/>
    </location>
</feature>
<feature type="mutagenesis site" description="In gm279; embryos have no detectable ham-1 protein. Some daughter cells of neuroblasts which would normally undergo programmed cell death have abnormally large corpses. Daughter cell size asymmetry is reduced or lost." evidence="3 8">
    <location>
        <begin position="62"/>
        <end position="414"/>
    </location>
</feature>
<feature type="mutagenesis site" description="Significantly reduces localization to the cell cortex." evidence="6">
    <location>
        <begin position="251"/>
        <end position="261"/>
    </location>
</feature>
<feature type="mutagenesis site" description="Modest reduction in localization to nucleus. Results in localization exclusively to the cell cortex with little or no nuclear localization; when associated with 321-P--R-327 del." evidence="6">
    <original>KARRR</original>
    <variation>AAAAA</variation>
    <location>
        <begin position="286"/>
        <end position="290"/>
    </location>
</feature>
<feature type="mutagenesis site" description="Modest reduction in localization to nucleus. Results in localization exclusively to the cell cortex with little or no nuclear localization; when associated with 286-K--R-290." evidence="6">
    <location>
        <begin position="321"/>
        <end position="327"/>
    </location>
</feature>
<comment type="function">
    <text evidence="3 4 5 6 7 8 9 10">Probable transcription factor (PubMed:23946438). Required for asymmetric cell division in neuroblasts, perhaps acting by regulating spindle positioning and myosin polarization, and thus the position of the cleavage plane (PubMed:15979607, PubMed:18505863, PubMed:23946438, PubMed:26703426, PubMed:3200316, PubMed:8951066). Required to produce daughter cell size asymmetry in neuroblasts undergoing asymmetric cell division, usually giving rise to one precursor cell and one apoptotic cell (PubMed:15979607, PubMed:23946438, PubMed:29668718). Positively modulates expression of the serine/threonine kinase pig-1/MELK during asymmetric division of the Q.a neuroblast (PubMed:23946438). Plays a role in neural fate specification in several dopaminergic lineages, including the hermaphrodite-specific neuron (HSN)/phasmid neuron (PHB), acting in concert with the kinase, ham-1, and the T-box protein tbx-2 and the homeobox protein egl-5 (PubMed:18505863, PubMed:23946438, PubMed:28659600, PubMed:3200316, PubMed:8951066).</text>
</comment>
<comment type="subcellular location">
    <subcellularLocation>
        <location evidence="3 6">Cytoplasm</location>
        <location evidence="3 6">Cell cortex</location>
    </subcellularLocation>
    <subcellularLocation>
        <location evidence="5 6">Nucleus</location>
    </subcellularLocation>
    <subcellularLocation>
        <location evidence="5 6">Cytoplasm</location>
    </subcellularLocation>
    <text evidence="3 5 6">Distributed asymmetrically in the cell cortex in some embryonic cells, including the hermaphrodite-specific neuron (HSN)/phasmid neuron (PHB) neuroblast (PubMed:15979607, PubMed:26703426). Localized to nucleus during interphase and evenly distributed in the cytoplasm of dividing Q.a and Q.p neuroblasts (PubMed:23946438).</text>
</comment>
<comment type="developmental stage">
    <text evidence="5 10">First expressed at the onset of gastrulation, approximately 100 minutes after cleavage of the zygote (at protein level) (PubMed:8951066). Expressed in both Q.a and Q.p neuroblasts as well as in their neighboring cells (PubMed:23946438).</text>
</comment>
<accession>G5EEC5</accession>
<organism evidence="12">
    <name type="scientific">Caenorhabditis elegans</name>
    <dbReference type="NCBI Taxonomy" id="6239"/>
    <lineage>
        <taxon>Eukaryota</taxon>
        <taxon>Metazoa</taxon>
        <taxon>Ecdysozoa</taxon>
        <taxon>Nematoda</taxon>
        <taxon>Chromadorea</taxon>
        <taxon>Rhabditida</taxon>
        <taxon>Rhabditina</taxon>
        <taxon>Rhabditomorpha</taxon>
        <taxon>Rhabditoidea</taxon>
        <taxon>Rhabditidae</taxon>
        <taxon>Peloderinae</taxon>
        <taxon>Caenorhabditis</taxon>
    </lineage>
</organism>
<name>HAM1_CAEEL</name>
<sequence>MTYLAVVLNGPKAKNGRKVFDSFLEQNRQMFWNRELTSACESITYMGFMRPGTLFVSGPASQLTVLKDAWARRILKPAMGYTITSLGDLGAIQQVEQMHFVPLGDVICDAVAQLNRQGLAATEQAIRQYVARHCPHVAPPGIEMVRQTITSLLSTGFVYKMADHYFVSVPTNSPMRPPAKAATKTTKTTVECQTGASMMCPQQTSTSSDEHVIEPAKKDHKKCQNSNRRSIFARLFSRGMKPQTIMPSASPIHVGGPPTPPPAAMLPTKNKYPTYHHDLNEECQRKARRRNHPRRGETQKLLSSSSECLKYYPVDMPETRPTRRRARMASPLRSSTPNNSDSAYSISPPHTDSNEEAGSISDSEINHTYININKFRRQNFDSTQFEDLTGATATTSEEPEILGRHIRGVLISNL</sequence>
<keyword id="KW-0963">Cytoplasm</keyword>
<keyword id="KW-0539">Nucleus</keyword>
<keyword id="KW-1185">Reference proteome</keyword>
<gene>
    <name evidence="13" type="primary">ham-1</name>
    <name evidence="13" type="ORF">F53B2.6</name>
</gene>
<reference evidence="12" key="1">
    <citation type="journal article" date="1998" name="Science">
        <title>Genome sequence of the nematode C. elegans: a platform for investigating biology.</title>
        <authorList>
            <consortium name="The C. elegans sequencing consortium"/>
        </authorList>
    </citation>
    <scope>NUCLEOTIDE SEQUENCE [LARGE SCALE GENOMIC DNA]</scope>
    <source>
        <strain evidence="12">Bristol N2</strain>
    </source>
</reference>
<reference evidence="11" key="2">
    <citation type="journal article" date="1988" name="Nature">
        <title>A genetic pathway for the development of the Caenorhabditis elegans HSN motor neurons.</title>
        <authorList>
            <person name="Desai C."/>
            <person name="Garriga G."/>
            <person name="McIntire S.L."/>
            <person name="Horvitz H.R."/>
        </authorList>
    </citation>
    <scope>FUNCTION</scope>
    <scope>MUTAGENESIS OF GLY-47</scope>
</reference>
<reference evidence="11" key="3">
    <citation type="journal article" date="1996" name="Development">
        <title>Asymmetric distribution of the C. elegans HAM-1 protein in neuroblasts enables daughter cells to adopt distinct fates.</title>
        <authorList>
            <person name="Guenther C."/>
            <person name="Garriga G."/>
        </authorList>
    </citation>
    <scope>FUNCTION</scope>
    <scope>DEVELOPMENTAL STAGE</scope>
</reference>
<reference evidence="11" key="4">
    <citation type="journal article" date="2005" name="Dev. Biol.">
        <title>C. elegans HAM-1 positions the cleavage plane and regulates apoptosis in asymmetric neuroblast divisions.</title>
        <authorList>
            <person name="Frank C.A."/>
            <person name="Hawkins N.C."/>
            <person name="Guenther C."/>
            <person name="Horvitz H.R."/>
            <person name="Garriga G."/>
        </authorList>
    </citation>
    <scope>FUNCTION</scope>
    <scope>SUBCELLULAR LOCATION</scope>
    <scope>MUTAGENESIS OF GLY-47 AND 62-GLN--LEU-414</scope>
</reference>
<reference evidence="11" key="5">
    <citation type="journal article" date="2008" name="Genetics">
        <title>The T-box gene tbx-2, the homeobox gene egl-5 and the asymmetric cell division gene ham-1 specify neural fate in the HSN/PHB lineage.</title>
        <authorList>
            <person name="Singhvi A."/>
            <person name="Frank C.A."/>
            <person name="Garriga G."/>
        </authorList>
    </citation>
    <scope>FUNCTION</scope>
</reference>
<reference evidence="11" key="6">
    <citation type="journal article" date="2013" name="Development">
        <title>Developmental stage-dependent transcriptional regulatory pathways control neuroblast lineage progression.</title>
        <authorList>
            <person name="Feng G."/>
            <person name="Yi P."/>
            <person name="Yang Y."/>
            <person name="Chai Y."/>
            <person name="Tian D."/>
            <person name="Zhu Z."/>
            <person name="Liu J."/>
            <person name="Zhou F."/>
            <person name="Cheng Z."/>
            <person name="Wang X."/>
            <person name="Li W."/>
            <person name="Ou G."/>
        </authorList>
    </citation>
    <scope>FUNCTION</scope>
    <scope>SUBCELLULAR LOCATION</scope>
    <scope>DEVELOPMENTAL STAGE</scope>
</reference>
<reference evidence="11" key="7">
    <citation type="journal article" date="2016" name="Dev. Biol.">
        <title>C. elegans HAM-1 functions in the nucleus to regulate asymmetric neuroblast division.</title>
        <authorList>
            <person name="Leung A."/>
            <person name="Hua K."/>
            <person name="Ramachandran P."/>
            <person name="Hingwing K."/>
            <person name="Wu M."/>
            <person name="Koh P.L."/>
            <person name="Hawkins N."/>
        </authorList>
    </citation>
    <scope>FUNCTION</scope>
    <scope>SUBCELLULAR LOCATION</scope>
    <scope>MUTAGENESIS OF 1-MET--PHE-31; 251-PRO--PRO-261; 286-LYS--ARG-290 AND 321-PRO--ARG-327</scope>
</reference>
<reference evidence="11" key="8">
    <citation type="journal article" date="2017" name="Sci. Rep.">
        <title>Comparative genetic, proteomic and phosphoproteomic analysis of C. elegans embryos with a focus on ham-1/STOX and pig-1/MELK in dopaminergic neuron development.</title>
        <authorList>
            <person name="Offenburger S.L."/>
            <person name="Bensaddek D."/>
            <person name="Murillo A.B."/>
            <person name="Lamond A.I."/>
            <person name="Gartner A."/>
        </authorList>
    </citation>
    <scope>FUNCTION</scope>
</reference>
<reference evidence="11" key="9">
    <citation type="journal article" date="2018" name="PLoS ONE">
        <title>The Caenorhabditis elegans gene ham-1 regulates daughter cell size asymmetry primarily in divisions that produce a small anterior daughter cell.</title>
        <authorList>
            <person name="Teuliere J."/>
            <person name="Kovacevic I."/>
            <person name="Bao Z."/>
            <person name="Garriga G."/>
        </authorList>
    </citation>
    <scope>FUNCTION</scope>
    <scope>MUTAGENESIS OF 62-GLN--LEU-414</scope>
</reference>
<dbReference type="EMBL" id="BX284604">
    <property type="protein sequence ID" value="CAA98132.1"/>
    <property type="molecule type" value="Genomic_DNA"/>
</dbReference>
<dbReference type="PIR" id="T22539">
    <property type="entry name" value="T22539"/>
</dbReference>
<dbReference type="RefSeq" id="NP_502401.1">
    <property type="nucleotide sequence ID" value="NM_070000.8"/>
</dbReference>
<dbReference type="SMR" id="G5EEC5"/>
<dbReference type="FunCoup" id="G5EEC5">
    <property type="interactions" value="112"/>
</dbReference>
<dbReference type="STRING" id="6239.F53B2.6.1"/>
<dbReference type="PaxDb" id="6239-F53B2.6"/>
<dbReference type="EnsemblMetazoa" id="F53B2.6.1">
    <property type="protein sequence ID" value="F53B2.6.1"/>
    <property type="gene ID" value="WBGene00001820"/>
</dbReference>
<dbReference type="GeneID" id="178205"/>
<dbReference type="KEGG" id="cel:CELE_F53B2.6"/>
<dbReference type="AGR" id="WB:WBGene00001820"/>
<dbReference type="CTD" id="178205"/>
<dbReference type="WormBase" id="F53B2.6">
    <property type="protein sequence ID" value="CE17851"/>
    <property type="gene ID" value="WBGene00001820"/>
    <property type="gene designation" value="ham-1"/>
</dbReference>
<dbReference type="eggNOG" id="KOG3897">
    <property type="taxonomic scope" value="Eukaryota"/>
</dbReference>
<dbReference type="GeneTree" id="ENSGT00520000055589"/>
<dbReference type="HOGENOM" id="CLU_736153_0_0_1"/>
<dbReference type="InParanoid" id="G5EEC5"/>
<dbReference type="OMA" id="GPIDPPE"/>
<dbReference type="OrthoDB" id="10020110at2759"/>
<dbReference type="PRO" id="PR:G5EEC5"/>
<dbReference type="Proteomes" id="UP000001940">
    <property type="component" value="Chromosome IV"/>
</dbReference>
<dbReference type="Bgee" id="WBGene00001820">
    <property type="expression patterns" value="Expressed in embryo and 3 other cell types or tissues"/>
</dbReference>
<dbReference type="GO" id="GO:0005938">
    <property type="term" value="C:cell cortex"/>
    <property type="evidence" value="ECO:0000314"/>
    <property type="project" value="UniProtKB"/>
</dbReference>
<dbReference type="GO" id="GO:0005737">
    <property type="term" value="C:cytoplasm"/>
    <property type="evidence" value="ECO:0000314"/>
    <property type="project" value="UniProtKB"/>
</dbReference>
<dbReference type="GO" id="GO:0005634">
    <property type="term" value="C:nucleus"/>
    <property type="evidence" value="ECO:0000314"/>
    <property type="project" value="UniProtKB"/>
</dbReference>
<dbReference type="GO" id="GO:0001228">
    <property type="term" value="F:DNA-binding transcription activator activity, RNA polymerase II-specific"/>
    <property type="evidence" value="ECO:0000315"/>
    <property type="project" value="WormBase"/>
</dbReference>
<dbReference type="GO" id="GO:0009952">
    <property type="term" value="P:anterior/posterior pattern specification"/>
    <property type="evidence" value="ECO:0000315"/>
    <property type="project" value="UniProtKB"/>
</dbReference>
<dbReference type="GO" id="GO:0055059">
    <property type="term" value="P:asymmetric neuroblast division"/>
    <property type="evidence" value="ECO:0000315"/>
    <property type="project" value="UniProtKB"/>
</dbReference>
<dbReference type="GO" id="GO:0045167">
    <property type="term" value="P:asymmetric protein localization involved in cell fate determination"/>
    <property type="evidence" value="ECO:0000315"/>
    <property type="project" value="WormBase"/>
</dbReference>
<dbReference type="GO" id="GO:0001709">
    <property type="term" value="P:cell fate determination"/>
    <property type="evidence" value="ECO:0000315"/>
    <property type="project" value="WormBase"/>
</dbReference>
<dbReference type="GO" id="GO:0071542">
    <property type="term" value="P:dopaminergic neuron differentiation"/>
    <property type="evidence" value="ECO:0000315"/>
    <property type="project" value="UniProtKB"/>
</dbReference>
<dbReference type="GO" id="GO:0051402">
    <property type="term" value="P:neuron apoptotic process"/>
    <property type="evidence" value="ECO:0000315"/>
    <property type="project" value="UniProtKB"/>
</dbReference>
<dbReference type="GO" id="GO:0001764">
    <property type="term" value="P:neuron migration"/>
    <property type="evidence" value="ECO:0000315"/>
    <property type="project" value="WormBase"/>
</dbReference>
<dbReference type="GO" id="GO:0045944">
    <property type="term" value="P:positive regulation of transcription by RNA polymerase II"/>
    <property type="evidence" value="ECO:0000315"/>
    <property type="project" value="WormBase"/>
</dbReference>
<dbReference type="GO" id="GO:1990179">
    <property type="term" value="P:protein localization to actomyosin contractile ring"/>
    <property type="evidence" value="ECO:0000315"/>
    <property type="project" value="UniProtKB"/>
</dbReference>
<dbReference type="GO" id="GO:0008361">
    <property type="term" value="P:regulation of cell size"/>
    <property type="evidence" value="ECO:0000315"/>
    <property type="project" value="UniProtKB"/>
</dbReference>
<dbReference type="GO" id="GO:0051653">
    <property type="term" value="P:spindle localization"/>
    <property type="evidence" value="ECO:0000315"/>
    <property type="project" value="UniProtKB"/>
</dbReference>
<dbReference type="InterPro" id="IPR019391">
    <property type="entry name" value="Storkhead-box_winged-helix"/>
</dbReference>
<dbReference type="InterPro" id="IPR040126">
    <property type="entry name" value="STOX1/2"/>
</dbReference>
<dbReference type="PANTHER" id="PTHR22437:SF0">
    <property type="entry name" value="FI21431P1"/>
    <property type="match status" value="1"/>
</dbReference>
<dbReference type="PANTHER" id="PTHR22437">
    <property type="entry name" value="WINGED HELIX DOMAIN-CONTAINING PROTEIN"/>
    <property type="match status" value="1"/>
</dbReference>
<dbReference type="Pfam" id="PF10264">
    <property type="entry name" value="Stork_head"/>
    <property type="match status" value="1"/>
</dbReference>
<protein>
    <recommendedName>
        <fullName evidence="11">Stork-head box protein ham-1</fullName>
    </recommendedName>
    <alternativeName>
        <fullName evidence="13">HSN abnormal migration 1</fullName>
    </alternativeName>
</protein>
<evidence type="ECO:0000255" key="1"/>
<evidence type="ECO:0000256" key="2">
    <source>
        <dbReference type="SAM" id="MobiDB-lite"/>
    </source>
</evidence>
<evidence type="ECO:0000269" key="3">
    <source>
    </source>
</evidence>
<evidence type="ECO:0000269" key="4">
    <source>
    </source>
</evidence>
<evidence type="ECO:0000269" key="5">
    <source>
    </source>
</evidence>
<evidence type="ECO:0000269" key="6">
    <source>
    </source>
</evidence>
<evidence type="ECO:0000269" key="7">
    <source>
    </source>
</evidence>
<evidence type="ECO:0000269" key="8">
    <source>
    </source>
</evidence>
<evidence type="ECO:0000269" key="9">
    <source>
    </source>
</evidence>
<evidence type="ECO:0000269" key="10">
    <source>
    </source>
</evidence>
<evidence type="ECO:0000305" key="11"/>
<evidence type="ECO:0000312" key="12">
    <source>
        <dbReference type="Proteomes" id="UP000001940"/>
    </source>
</evidence>
<evidence type="ECO:0000312" key="13">
    <source>
        <dbReference type="WormBase" id="F53B2.6"/>
    </source>
</evidence>
<proteinExistence type="evidence at protein level"/>